<protein>
    <recommendedName>
        <fullName evidence="1">Eukaryotic translation initiation factor 3 subunit G</fullName>
        <shortName evidence="1">eIF3g</shortName>
    </recommendedName>
    <alternativeName>
        <fullName evidence="1">Eukaryotic translation initiation factor 3 RNA-binding subunit</fullName>
        <shortName evidence="1">eIF-3 RNA-binding subunit</shortName>
    </alternativeName>
    <alternativeName>
        <fullName evidence="1">Translation initiation factor eIF3 p33 subunit homolog</fullName>
        <shortName evidence="1">eIF3 p33 homolog</shortName>
    </alternativeName>
</protein>
<reference key="1">
    <citation type="journal article" date="2011" name="PLoS Genet.">
        <title>Genomic analysis of the necrotrophic fungal pathogens Sclerotinia sclerotiorum and Botrytis cinerea.</title>
        <authorList>
            <person name="Amselem J."/>
            <person name="Cuomo C.A."/>
            <person name="van Kan J.A.L."/>
            <person name="Viaud M."/>
            <person name="Benito E.P."/>
            <person name="Couloux A."/>
            <person name="Coutinho P.M."/>
            <person name="de Vries R.P."/>
            <person name="Dyer P.S."/>
            <person name="Fillinger S."/>
            <person name="Fournier E."/>
            <person name="Gout L."/>
            <person name="Hahn M."/>
            <person name="Kohn L."/>
            <person name="Lapalu N."/>
            <person name="Plummer K.M."/>
            <person name="Pradier J.-M."/>
            <person name="Quevillon E."/>
            <person name="Sharon A."/>
            <person name="Simon A."/>
            <person name="ten Have A."/>
            <person name="Tudzynski B."/>
            <person name="Tudzynski P."/>
            <person name="Wincker P."/>
            <person name="Andrew M."/>
            <person name="Anthouard V."/>
            <person name="Beever R.E."/>
            <person name="Beffa R."/>
            <person name="Benoit I."/>
            <person name="Bouzid O."/>
            <person name="Brault B."/>
            <person name="Chen Z."/>
            <person name="Choquer M."/>
            <person name="Collemare J."/>
            <person name="Cotton P."/>
            <person name="Danchin E.G."/>
            <person name="Da Silva C."/>
            <person name="Gautier A."/>
            <person name="Giraud C."/>
            <person name="Giraud T."/>
            <person name="Gonzalez C."/>
            <person name="Grossetete S."/>
            <person name="Gueldener U."/>
            <person name="Henrissat B."/>
            <person name="Howlett B.J."/>
            <person name="Kodira C."/>
            <person name="Kretschmer M."/>
            <person name="Lappartient A."/>
            <person name="Leroch M."/>
            <person name="Levis C."/>
            <person name="Mauceli E."/>
            <person name="Neuveglise C."/>
            <person name="Oeser B."/>
            <person name="Pearson M."/>
            <person name="Poulain J."/>
            <person name="Poussereau N."/>
            <person name="Quesneville H."/>
            <person name="Rascle C."/>
            <person name="Schumacher J."/>
            <person name="Segurens B."/>
            <person name="Sexton A."/>
            <person name="Silva E."/>
            <person name="Sirven C."/>
            <person name="Soanes D.M."/>
            <person name="Talbot N.J."/>
            <person name="Templeton M."/>
            <person name="Yandava C."/>
            <person name="Yarden O."/>
            <person name="Zeng Q."/>
            <person name="Rollins J.A."/>
            <person name="Lebrun M.-H."/>
            <person name="Dickman M."/>
        </authorList>
    </citation>
    <scope>NUCLEOTIDE SEQUENCE [LARGE SCALE GENOMIC DNA]</scope>
    <source>
        <strain>ATCC 18683 / 1980 / Ss-1</strain>
    </source>
</reference>
<feature type="chain" id="PRO_0000366895" description="Eukaryotic translation initiation factor 3 subunit G">
    <location>
        <begin position="1"/>
        <end position="288"/>
    </location>
</feature>
<feature type="domain" description="RRM" evidence="1">
    <location>
        <begin position="208"/>
        <end position="286"/>
    </location>
</feature>
<feature type="region of interest" description="Disordered" evidence="2">
    <location>
        <begin position="1"/>
        <end position="33"/>
    </location>
</feature>
<feature type="compositionally biased region" description="Acidic residues" evidence="2">
    <location>
        <begin position="11"/>
        <end position="20"/>
    </location>
</feature>
<feature type="compositionally biased region" description="Polar residues" evidence="2">
    <location>
        <begin position="21"/>
        <end position="33"/>
    </location>
</feature>
<accession>A7EWN6</accession>
<organism>
    <name type="scientific">Sclerotinia sclerotiorum (strain ATCC 18683 / 1980 / Ss-1)</name>
    <name type="common">White mold</name>
    <name type="synonym">Whetzelinia sclerotiorum</name>
    <dbReference type="NCBI Taxonomy" id="665079"/>
    <lineage>
        <taxon>Eukaryota</taxon>
        <taxon>Fungi</taxon>
        <taxon>Dikarya</taxon>
        <taxon>Ascomycota</taxon>
        <taxon>Pezizomycotina</taxon>
        <taxon>Leotiomycetes</taxon>
        <taxon>Helotiales</taxon>
        <taxon>Sclerotiniaceae</taxon>
        <taxon>Sclerotinia</taxon>
    </lineage>
</organism>
<evidence type="ECO:0000255" key="1">
    <source>
        <dbReference type="HAMAP-Rule" id="MF_03006"/>
    </source>
</evidence>
<evidence type="ECO:0000256" key="2">
    <source>
        <dbReference type="SAM" id="MobiDB-lite"/>
    </source>
</evidence>
<dbReference type="EMBL" id="CH476634">
    <property type="protein sequence ID" value="EDN93878.1"/>
    <property type="molecule type" value="Genomic_DNA"/>
</dbReference>
<dbReference type="RefSeq" id="XP_001589112.1">
    <property type="nucleotide sequence ID" value="XM_001589062.1"/>
</dbReference>
<dbReference type="SMR" id="A7EWN6"/>
<dbReference type="FunCoup" id="A7EWN6">
    <property type="interactions" value="1037"/>
</dbReference>
<dbReference type="STRING" id="665079.A7EWN6"/>
<dbReference type="GeneID" id="5485483"/>
<dbReference type="KEGG" id="ssl:SS1G_09745"/>
<dbReference type="VEuPathDB" id="FungiDB:sscle_01g001090"/>
<dbReference type="InParanoid" id="A7EWN6"/>
<dbReference type="OMA" id="ICQGDHF"/>
<dbReference type="OrthoDB" id="639027at2759"/>
<dbReference type="Proteomes" id="UP000001312">
    <property type="component" value="Unassembled WGS sequence"/>
</dbReference>
<dbReference type="GO" id="GO:0016282">
    <property type="term" value="C:eukaryotic 43S preinitiation complex"/>
    <property type="evidence" value="ECO:0007669"/>
    <property type="project" value="UniProtKB-UniRule"/>
</dbReference>
<dbReference type="GO" id="GO:0033290">
    <property type="term" value="C:eukaryotic 48S preinitiation complex"/>
    <property type="evidence" value="ECO:0007669"/>
    <property type="project" value="UniProtKB-UniRule"/>
</dbReference>
<dbReference type="GO" id="GO:0005852">
    <property type="term" value="C:eukaryotic translation initiation factor 3 complex"/>
    <property type="evidence" value="ECO:0007669"/>
    <property type="project" value="UniProtKB-UniRule"/>
</dbReference>
<dbReference type="GO" id="GO:0003723">
    <property type="term" value="F:RNA binding"/>
    <property type="evidence" value="ECO:0007669"/>
    <property type="project" value="UniProtKB-UniRule"/>
</dbReference>
<dbReference type="GO" id="GO:0003743">
    <property type="term" value="F:translation initiation factor activity"/>
    <property type="evidence" value="ECO:0007669"/>
    <property type="project" value="UniProtKB-UniRule"/>
</dbReference>
<dbReference type="GO" id="GO:0001732">
    <property type="term" value="P:formation of cytoplasmic translation initiation complex"/>
    <property type="evidence" value="ECO:0007669"/>
    <property type="project" value="UniProtKB-UniRule"/>
</dbReference>
<dbReference type="CDD" id="cd12933">
    <property type="entry name" value="eIF3G"/>
    <property type="match status" value="1"/>
</dbReference>
<dbReference type="CDD" id="cd12408">
    <property type="entry name" value="RRM_eIF3G_like"/>
    <property type="match status" value="1"/>
</dbReference>
<dbReference type="FunFam" id="3.30.70.330:FF:000328">
    <property type="entry name" value="Eukaryotic translation initiation factor 3 subunit G"/>
    <property type="match status" value="1"/>
</dbReference>
<dbReference type="Gene3D" id="3.30.70.330">
    <property type="match status" value="1"/>
</dbReference>
<dbReference type="HAMAP" id="MF_03006">
    <property type="entry name" value="eIF3g"/>
    <property type="match status" value="1"/>
</dbReference>
<dbReference type="InterPro" id="IPR017334">
    <property type="entry name" value="eIF3_g"/>
</dbReference>
<dbReference type="InterPro" id="IPR024675">
    <property type="entry name" value="eIF3g_N"/>
</dbReference>
<dbReference type="InterPro" id="IPR034240">
    <property type="entry name" value="eIF3G_RRM"/>
</dbReference>
<dbReference type="InterPro" id="IPR012677">
    <property type="entry name" value="Nucleotide-bd_a/b_plait_sf"/>
</dbReference>
<dbReference type="InterPro" id="IPR035979">
    <property type="entry name" value="RBD_domain_sf"/>
</dbReference>
<dbReference type="InterPro" id="IPR000504">
    <property type="entry name" value="RRM_dom"/>
</dbReference>
<dbReference type="PANTHER" id="PTHR10352">
    <property type="entry name" value="EUKARYOTIC TRANSLATION INITIATION FACTOR 3 SUBUNIT G"/>
    <property type="match status" value="1"/>
</dbReference>
<dbReference type="Pfam" id="PF12353">
    <property type="entry name" value="eIF3g"/>
    <property type="match status" value="1"/>
</dbReference>
<dbReference type="Pfam" id="PF00076">
    <property type="entry name" value="RRM_1"/>
    <property type="match status" value="1"/>
</dbReference>
<dbReference type="PIRSF" id="PIRSF037949">
    <property type="entry name" value="Transl_init_eIF-3_RNA-bind"/>
    <property type="match status" value="1"/>
</dbReference>
<dbReference type="SMART" id="SM00360">
    <property type="entry name" value="RRM"/>
    <property type="match status" value="1"/>
</dbReference>
<dbReference type="SUPFAM" id="SSF54928">
    <property type="entry name" value="RNA-binding domain, RBD"/>
    <property type="match status" value="1"/>
</dbReference>
<dbReference type="PROSITE" id="PS50102">
    <property type="entry name" value="RRM"/>
    <property type="match status" value="1"/>
</dbReference>
<keyword id="KW-0963">Cytoplasm</keyword>
<keyword id="KW-0396">Initiation factor</keyword>
<keyword id="KW-0648">Protein biosynthesis</keyword>
<keyword id="KW-1185">Reference proteome</keyword>
<keyword id="KW-0694">RNA-binding</keyword>
<sequence>MSRVANNRDWADDEDLEDSNELPQSTTTTNKDGTQTIVTWRFNDDGKKVKTTRRIRFTKVKEIVNPRVAERKSWGKFGLSQKDAAGPASDTTSVGENIIFRPSTNWRKDAKEEVSDAGAMKNKLKDKQVKCRICSGEHFTAKCPFKGTMAPLGEEGAVDVAAGHADTPEGPGGLGAGKSSYVPPHLRNGGAAGGERMGGGKFERDDLATLRVTNVSEMAEEQELRDMFERFGRVTRVFLAKDRETGLAKGFAFISFQERSDAAKACEKMDGYGFKHLILRVEFAKKAT</sequence>
<gene>
    <name type="primary">tif35</name>
    <name type="ORF">SS1G_09745</name>
</gene>
<proteinExistence type="inferred from homology"/>
<name>EIF3G_SCLS1</name>
<comment type="function">
    <text evidence="1">RNA-binding component of the eukaryotic translation initiation factor 3 (eIF-3) complex, which is involved in protein synthesis of a specialized repertoire of mRNAs and, together with other initiation factors, stimulates binding of mRNA and methionyl-tRNAi to the 40S ribosome. The eIF-3 complex specifically targets and initiates translation of a subset of mRNAs involved in cell proliferation. This subunit can bind 18S rRNA.</text>
</comment>
<comment type="subunit">
    <text evidence="1">Component of the eukaryotic translation initiation factor 3 (eIF-3) complex.</text>
</comment>
<comment type="subcellular location">
    <subcellularLocation>
        <location evidence="1">Cytoplasm</location>
    </subcellularLocation>
</comment>
<comment type="similarity">
    <text evidence="1">Belongs to the eIF-3 subunit G family.</text>
</comment>